<gene>
    <name evidence="1" type="primary">tig</name>
    <name type="ordered locus">Acry_0916</name>
</gene>
<evidence type="ECO:0000255" key="1">
    <source>
        <dbReference type="HAMAP-Rule" id="MF_00303"/>
    </source>
</evidence>
<protein>
    <recommendedName>
        <fullName evidence="1">Trigger factor</fullName>
        <shortName evidence="1">TF</shortName>
        <ecNumber evidence="1">5.2.1.8</ecNumber>
    </recommendedName>
    <alternativeName>
        <fullName evidence="1">PPIase</fullName>
    </alternativeName>
</protein>
<feature type="chain" id="PRO_1000022636" description="Trigger factor">
    <location>
        <begin position="1"/>
        <end position="440"/>
    </location>
</feature>
<feature type="domain" description="PPIase FKBP-type" evidence="1">
    <location>
        <begin position="163"/>
        <end position="248"/>
    </location>
</feature>
<reference key="1">
    <citation type="submission" date="2007-05" db="EMBL/GenBank/DDBJ databases">
        <title>Complete sequence of chromosome of Acidiphilium cryptum JF-5.</title>
        <authorList>
            <consortium name="US DOE Joint Genome Institute"/>
            <person name="Copeland A."/>
            <person name="Lucas S."/>
            <person name="Lapidus A."/>
            <person name="Barry K."/>
            <person name="Detter J.C."/>
            <person name="Glavina del Rio T."/>
            <person name="Hammon N."/>
            <person name="Israni S."/>
            <person name="Dalin E."/>
            <person name="Tice H."/>
            <person name="Pitluck S."/>
            <person name="Sims D."/>
            <person name="Brettin T."/>
            <person name="Bruce D."/>
            <person name="Han C."/>
            <person name="Schmutz J."/>
            <person name="Larimer F."/>
            <person name="Land M."/>
            <person name="Hauser L."/>
            <person name="Kyrpides N."/>
            <person name="Kim E."/>
            <person name="Magnuson T."/>
            <person name="Richardson P."/>
        </authorList>
    </citation>
    <scope>NUCLEOTIDE SEQUENCE [LARGE SCALE GENOMIC DNA]</scope>
    <source>
        <strain>JF-5</strain>
    </source>
</reference>
<keyword id="KW-0131">Cell cycle</keyword>
<keyword id="KW-0132">Cell division</keyword>
<keyword id="KW-0143">Chaperone</keyword>
<keyword id="KW-0963">Cytoplasm</keyword>
<keyword id="KW-0413">Isomerase</keyword>
<keyword id="KW-1185">Reference proteome</keyword>
<keyword id="KW-0697">Rotamase</keyword>
<comment type="function">
    <text evidence="1">Involved in protein export. Acts as a chaperone by maintaining the newly synthesized protein in an open conformation. Functions as a peptidyl-prolyl cis-trans isomerase.</text>
</comment>
<comment type="catalytic activity">
    <reaction evidence="1">
        <text>[protein]-peptidylproline (omega=180) = [protein]-peptidylproline (omega=0)</text>
        <dbReference type="Rhea" id="RHEA:16237"/>
        <dbReference type="Rhea" id="RHEA-COMP:10747"/>
        <dbReference type="Rhea" id="RHEA-COMP:10748"/>
        <dbReference type="ChEBI" id="CHEBI:83833"/>
        <dbReference type="ChEBI" id="CHEBI:83834"/>
        <dbReference type="EC" id="5.2.1.8"/>
    </reaction>
</comment>
<comment type="subcellular location">
    <subcellularLocation>
        <location>Cytoplasm</location>
    </subcellularLocation>
    <text evidence="1">About half TF is bound to the ribosome near the polypeptide exit tunnel while the other half is free in the cytoplasm.</text>
</comment>
<comment type="domain">
    <text evidence="1">Consists of 3 domains; the N-terminus binds the ribosome, the middle domain has PPIase activity, while the C-terminus has intrinsic chaperone activity on its own.</text>
</comment>
<comment type="similarity">
    <text evidence="1">Belongs to the FKBP-type PPIase family. Tig subfamily.</text>
</comment>
<accession>A5FX03</accession>
<sequence>MQVTETLTEGLKRGFTVVVPGSDLSEKREKRLAELSKTMQMPGFRPGKVPLSMVRKRFGDAVAAEVMEASVNEATERMINDRSLRPAVQPKVEVVRAEPDSDLEFTVELEVLPEVTIPDLKAISLTRPKAPVTEAEIDEAIARFAEQRAETEVVTEDRPAATGDILTVDFLGKRDGVPFEGGAGTDTDIELGGSGFIPGFAEQMEGMKAGETKVITVTFPEQYHAAELAGKEATFDITAKALKRRVAPVIDDAFAEANGFENLAEFRKFFADRLEQSRAGASRLKVKRALLDKLAEQADFPAPASLVDAEFAEIWRQVEAEKQAGRLDEEDAGKDEETLRADYRAIAERRVRLGLLVAEIGRTNNVQITEQDMRRAMIAEMQQFPGQEKMIMEFYQKNPRALDRLRGPIFEDKVVDYALELATVTDEEVSAEALFADTDD</sequence>
<proteinExistence type="inferred from homology"/>
<dbReference type="EC" id="5.2.1.8" evidence="1"/>
<dbReference type="EMBL" id="CP000697">
    <property type="protein sequence ID" value="ABQ30135.1"/>
    <property type="molecule type" value="Genomic_DNA"/>
</dbReference>
<dbReference type="RefSeq" id="WP_007422420.1">
    <property type="nucleotide sequence ID" value="NC_009484.1"/>
</dbReference>
<dbReference type="SMR" id="A5FX03"/>
<dbReference type="STRING" id="349163.Acry_0916"/>
<dbReference type="KEGG" id="acr:Acry_0916"/>
<dbReference type="eggNOG" id="COG0544">
    <property type="taxonomic scope" value="Bacteria"/>
</dbReference>
<dbReference type="HOGENOM" id="CLU_033058_2_2_5"/>
<dbReference type="Proteomes" id="UP000000245">
    <property type="component" value="Chromosome"/>
</dbReference>
<dbReference type="GO" id="GO:0005737">
    <property type="term" value="C:cytoplasm"/>
    <property type="evidence" value="ECO:0007669"/>
    <property type="project" value="UniProtKB-SubCell"/>
</dbReference>
<dbReference type="GO" id="GO:0003755">
    <property type="term" value="F:peptidyl-prolyl cis-trans isomerase activity"/>
    <property type="evidence" value="ECO:0007669"/>
    <property type="project" value="UniProtKB-UniRule"/>
</dbReference>
<dbReference type="GO" id="GO:0044183">
    <property type="term" value="F:protein folding chaperone"/>
    <property type="evidence" value="ECO:0007669"/>
    <property type="project" value="TreeGrafter"/>
</dbReference>
<dbReference type="GO" id="GO:0043022">
    <property type="term" value="F:ribosome binding"/>
    <property type="evidence" value="ECO:0007669"/>
    <property type="project" value="TreeGrafter"/>
</dbReference>
<dbReference type="GO" id="GO:0051083">
    <property type="term" value="P:'de novo' cotranslational protein folding"/>
    <property type="evidence" value="ECO:0007669"/>
    <property type="project" value="TreeGrafter"/>
</dbReference>
<dbReference type="GO" id="GO:0051301">
    <property type="term" value="P:cell division"/>
    <property type="evidence" value="ECO:0007669"/>
    <property type="project" value="UniProtKB-KW"/>
</dbReference>
<dbReference type="GO" id="GO:0061077">
    <property type="term" value="P:chaperone-mediated protein folding"/>
    <property type="evidence" value="ECO:0007669"/>
    <property type="project" value="TreeGrafter"/>
</dbReference>
<dbReference type="GO" id="GO:0015031">
    <property type="term" value="P:protein transport"/>
    <property type="evidence" value="ECO:0007669"/>
    <property type="project" value="UniProtKB-UniRule"/>
</dbReference>
<dbReference type="GO" id="GO:0043335">
    <property type="term" value="P:protein unfolding"/>
    <property type="evidence" value="ECO:0007669"/>
    <property type="project" value="TreeGrafter"/>
</dbReference>
<dbReference type="FunFam" id="3.10.50.40:FF:000001">
    <property type="entry name" value="Trigger factor"/>
    <property type="match status" value="1"/>
</dbReference>
<dbReference type="Gene3D" id="3.10.50.40">
    <property type="match status" value="1"/>
</dbReference>
<dbReference type="Gene3D" id="3.30.70.1050">
    <property type="entry name" value="Trigger factor ribosome-binding domain"/>
    <property type="match status" value="1"/>
</dbReference>
<dbReference type="Gene3D" id="1.10.3120.10">
    <property type="entry name" value="Trigger factor, C-terminal domain"/>
    <property type="match status" value="1"/>
</dbReference>
<dbReference type="HAMAP" id="MF_00303">
    <property type="entry name" value="Trigger_factor_Tig"/>
    <property type="match status" value="1"/>
</dbReference>
<dbReference type="InterPro" id="IPR046357">
    <property type="entry name" value="PPIase_dom_sf"/>
</dbReference>
<dbReference type="InterPro" id="IPR001179">
    <property type="entry name" value="PPIase_FKBP_dom"/>
</dbReference>
<dbReference type="InterPro" id="IPR005215">
    <property type="entry name" value="Trig_fac"/>
</dbReference>
<dbReference type="InterPro" id="IPR008880">
    <property type="entry name" value="Trigger_fac_C"/>
</dbReference>
<dbReference type="InterPro" id="IPR037041">
    <property type="entry name" value="Trigger_fac_C_sf"/>
</dbReference>
<dbReference type="InterPro" id="IPR008881">
    <property type="entry name" value="Trigger_fac_ribosome-bd_bac"/>
</dbReference>
<dbReference type="InterPro" id="IPR036611">
    <property type="entry name" value="Trigger_fac_ribosome-bd_sf"/>
</dbReference>
<dbReference type="InterPro" id="IPR027304">
    <property type="entry name" value="Trigger_fact/SurA_dom_sf"/>
</dbReference>
<dbReference type="NCBIfam" id="TIGR00115">
    <property type="entry name" value="tig"/>
    <property type="match status" value="1"/>
</dbReference>
<dbReference type="PANTHER" id="PTHR30560">
    <property type="entry name" value="TRIGGER FACTOR CHAPERONE AND PEPTIDYL-PROLYL CIS/TRANS ISOMERASE"/>
    <property type="match status" value="1"/>
</dbReference>
<dbReference type="PANTHER" id="PTHR30560:SF3">
    <property type="entry name" value="TRIGGER FACTOR-LIKE PROTEIN TIG, CHLOROPLASTIC"/>
    <property type="match status" value="1"/>
</dbReference>
<dbReference type="Pfam" id="PF00254">
    <property type="entry name" value="FKBP_C"/>
    <property type="match status" value="1"/>
</dbReference>
<dbReference type="Pfam" id="PF05698">
    <property type="entry name" value="Trigger_C"/>
    <property type="match status" value="1"/>
</dbReference>
<dbReference type="Pfam" id="PF05697">
    <property type="entry name" value="Trigger_N"/>
    <property type="match status" value="1"/>
</dbReference>
<dbReference type="PIRSF" id="PIRSF003095">
    <property type="entry name" value="Trigger_factor"/>
    <property type="match status" value="1"/>
</dbReference>
<dbReference type="SUPFAM" id="SSF54534">
    <property type="entry name" value="FKBP-like"/>
    <property type="match status" value="1"/>
</dbReference>
<dbReference type="SUPFAM" id="SSF109998">
    <property type="entry name" value="Triger factor/SurA peptide-binding domain-like"/>
    <property type="match status" value="1"/>
</dbReference>
<dbReference type="SUPFAM" id="SSF102735">
    <property type="entry name" value="Trigger factor ribosome-binding domain"/>
    <property type="match status" value="1"/>
</dbReference>
<dbReference type="PROSITE" id="PS50059">
    <property type="entry name" value="FKBP_PPIASE"/>
    <property type="match status" value="1"/>
</dbReference>
<name>TIG_ACICJ</name>
<organism>
    <name type="scientific">Acidiphilium cryptum (strain JF-5)</name>
    <dbReference type="NCBI Taxonomy" id="349163"/>
    <lineage>
        <taxon>Bacteria</taxon>
        <taxon>Pseudomonadati</taxon>
        <taxon>Pseudomonadota</taxon>
        <taxon>Alphaproteobacteria</taxon>
        <taxon>Acetobacterales</taxon>
        <taxon>Acidocellaceae</taxon>
        <taxon>Acidiphilium</taxon>
    </lineage>
</organism>